<reference key="1">
    <citation type="journal article" date="2008" name="J. Bacteriol.">
        <title>Complete genome sequence of the mosquitocidal bacterium Bacillus sphaericus C3-41 and comparison with those of closely related Bacillus species.</title>
        <authorList>
            <person name="Hu X."/>
            <person name="Fan W."/>
            <person name="Han B."/>
            <person name="Liu H."/>
            <person name="Zheng D."/>
            <person name="Li Q."/>
            <person name="Dong W."/>
            <person name="Yan J."/>
            <person name="Gao M."/>
            <person name="Berry C."/>
            <person name="Yuan Z."/>
        </authorList>
    </citation>
    <scope>NUCLEOTIDE SEQUENCE [LARGE SCALE GENOMIC DNA]</scope>
    <source>
        <strain>C3-41</strain>
    </source>
</reference>
<sequence>MSKVYVFDHPLIQHKLTYIRDKNTGTKEFRELVDEVATLMAFEITRDMPVEEIEIETPVTIAKTKVLSGKKLAIVPILRAGIGMVDGVLKLIPAAKVGHIGLYRDPETLKPVEYYAKLPADVEERDFIIVDPMLATGGSAVEAIHSLKKRGAKNIKFMCLIAAPEGVKAIQEEHSDVDIYIAALDEKLNDHGYIVPGLGDAGDRLFGTK</sequence>
<keyword id="KW-0021">Allosteric enzyme</keyword>
<keyword id="KW-0328">Glycosyltransferase</keyword>
<keyword id="KW-0342">GTP-binding</keyword>
<keyword id="KW-0460">Magnesium</keyword>
<keyword id="KW-0547">Nucleotide-binding</keyword>
<keyword id="KW-0808">Transferase</keyword>
<accession>B1HM47</accession>
<gene>
    <name evidence="1" type="primary">upp</name>
    <name type="ordered locus">Bsph_1007</name>
</gene>
<comment type="function">
    <text evidence="1">Catalyzes the conversion of uracil and 5-phospho-alpha-D-ribose 1-diphosphate (PRPP) to UMP and diphosphate.</text>
</comment>
<comment type="catalytic activity">
    <reaction evidence="1">
        <text>UMP + diphosphate = 5-phospho-alpha-D-ribose 1-diphosphate + uracil</text>
        <dbReference type="Rhea" id="RHEA:13017"/>
        <dbReference type="ChEBI" id="CHEBI:17568"/>
        <dbReference type="ChEBI" id="CHEBI:33019"/>
        <dbReference type="ChEBI" id="CHEBI:57865"/>
        <dbReference type="ChEBI" id="CHEBI:58017"/>
        <dbReference type="EC" id="2.4.2.9"/>
    </reaction>
</comment>
<comment type="cofactor">
    <cofactor evidence="1">
        <name>Mg(2+)</name>
        <dbReference type="ChEBI" id="CHEBI:18420"/>
    </cofactor>
    <text evidence="1">Binds 1 Mg(2+) ion per subunit. The magnesium is bound as Mg-PRPP.</text>
</comment>
<comment type="activity regulation">
    <text evidence="1">Allosterically activated by GTP.</text>
</comment>
<comment type="pathway">
    <text evidence="1">Pyrimidine metabolism; UMP biosynthesis via salvage pathway; UMP from uracil: step 1/1.</text>
</comment>
<comment type="similarity">
    <text evidence="1">Belongs to the UPRTase family.</text>
</comment>
<evidence type="ECO:0000255" key="1">
    <source>
        <dbReference type="HAMAP-Rule" id="MF_01218"/>
    </source>
</evidence>
<dbReference type="EC" id="2.4.2.9" evidence="1"/>
<dbReference type="EMBL" id="CP000817">
    <property type="protein sequence ID" value="ACA38619.1"/>
    <property type="molecule type" value="Genomic_DNA"/>
</dbReference>
<dbReference type="RefSeq" id="WP_004269470.1">
    <property type="nucleotide sequence ID" value="NC_010382.1"/>
</dbReference>
<dbReference type="SMR" id="B1HM47"/>
<dbReference type="EnsemblBacteria" id="ACA38619">
    <property type="protein sequence ID" value="ACA38619"/>
    <property type="gene ID" value="Bsph_1007"/>
</dbReference>
<dbReference type="GeneID" id="74903683"/>
<dbReference type="KEGG" id="lsp:Bsph_1007"/>
<dbReference type="HOGENOM" id="CLU_067096_2_2_9"/>
<dbReference type="UniPathway" id="UPA00574">
    <property type="reaction ID" value="UER00636"/>
</dbReference>
<dbReference type="Proteomes" id="UP000002164">
    <property type="component" value="Chromosome"/>
</dbReference>
<dbReference type="GO" id="GO:0005525">
    <property type="term" value="F:GTP binding"/>
    <property type="evidence" value="ECO:0007669"/>
    <property type="project" value="UniProtKB-KW"/>
</dbReference>
<dbReference type="GO" id="GO:0000287">
    <property type="term" value="F:magnesium ion binding"/>
    <property type="evidence" value="ECO:0007669"/>
    <property type="project" value="UniProtKB-UniRule"/>
</dbReference>
<dbReference type="GO" id="GO:0004845">
    <property type="term" value="F:uracil phosphoribosyltransferase activity"/>
    <property type="evidence" value="ECO:0007669"/>
    <property type="project" value="UniProtKB-UniRule"/>
</dbReference>
<dbReference type="GO" id="GO:0044206">
    <property type="term" value="P:UMP salvage"/>
    <property type="evidence" value="ECO:0007669"/>
    <property type="project" value="UniProtKB-UniRule"/>
</dbReference>
<dbReference type="GO" id="GO:0006223">
    <property type="term" value="P:uracil salvage"/>
    <property type="evidence" value="ECO:0007669"/>
    <property type="project" value="InterPro"/>
</dbReference>
<dbReference type="CDD" id="cd06223">
    <property type="entry name" value="PRTases_typeI"/>
    <property type="match status" value="1"/>
</dbReference>
<dbReference type="FunFam" id="3.40.50.2020:FF:000003">
    <property type="entry name" value="Uracil phosphoribosyltransferase"/>
    <property type="match status" value="1"/>
</dbReference>
<dbReference type="Gene3D" id="3.40.50.2020">
    <property type="match status" value="1"/>
</dbReference>
<dbReference type="HAMAP" id="MF_01218_B">
    <property type="entry name" value="Upp_B"/>
    <property type="match status" value="1"/>
</dbReference>
<dbReference type="InterPro" id="IPR000836">
    <property type="entry name" value="PRibTrfase_dom"/>
</dbReference>
<dbReference type="InterPro" id="IPR029057">
    <property type="entry name" value="PRTase-like"/>
</dbReference>
<dbReference type="InterPro" id="IPR034332">
    <property type="entry name" value="Upp_B"/>
</dbReference>
<dbReference type="InterPro" id="IPR050054">
    <property type="entry name" value="UPRTase/APRTase"/>
</dbReference>
<dbReference type="InterPro" id="IPR005765">
    <property type="entry name" value="Ura_phspho_trans"/>
</dbReference>
<dbReference type="NCBIfam" id="NF001097">
    <property type="entry name" value="PRK00129.1"/>
    <property type="match status" value="1"/>
</dbReference>
<dbReference type="NCBIfam" id="TIGR01091">
    <property type="entry name" value="upp"/>
    <property type="match status" value="1"/>
</dbReference>
<dbReference type="PANTHER" id="PTHR32315">
    <property type="entry name" value="ADENINE PHOSPHORIBOSYLTRANSFERASE"/>
    <property type="match status" value="1"/>
</dbReference>
<dbReference type="PANTHER" id="PTHR32315:SF4">
    <property type="entry name" value="URACIL PHOSPHORIBOSYLTRANSFERASE, CHLOROPLASTIC"/>
    <property type="match status" value="1"/>
</dbReference>
<dbReference type="Pfam" id="PF14681">
    <property type="entry name" value="UPRTase"/>
    <property type="match status" value="1"/>
</dbReference>
<dbReference type="SUPFAM" id="SSF53271">
    <property type="entry name" value="PRTase-like"/>
    <property type="match status" value="1"/>
</dbReference>
<proteinExistence type="inferred from homology"/>
<name>UPP_LYSSC</name>
<protein>
    <recommendedName>
        <fullName evidence="1">Uracil phosphoribosyltransferase</fullName>
        <ecNumber evidence="1">2.4.2.9</ecNumber>
    </recommendedName>
    <alternativeName>
        <fullName evidence="1">UMP pyrophosphorylase</fullName>
    </alternativeName>
    <alternativeName>
        <fullName evidence="1">UPRTase</fullName>
    </alternativeName>
</protein>
<feature type="chain" id="PRO_1000139139" description="Uracil phosphoribosyltransferase">
    <location>
        <begin position="1"/>
        <end position="209"/>
    </location>
</feature>
<feature type="binding site" evidence="1">
    <location>
        <position position="79"/>
    </location>
    <ligand>
        <name>5-phospho-alpha-D-ribose 1-diphosphate</name>
        <dbReference type="ChEBI" id="CHEBI:58017"/>
    </ligand>
</feature>
<feature type="binding site" evidence="1">
    <location>
        <position position="104"/>
    </location>
    <ligand>
        <name>5-phospho-alpha-D-ribose 1-diphosphate</name>
        <dbReference type="ChEBI" id="CHEBI:58017"/>
    </ligand>
</feature>
<feature type="binding site" evidence="1">
    <location>
        <begin position="131"/>
        <end position="139"/>
    </location>
    <ligand>
        <name>5-phospho-alpha-D-ribose 1-diphosphate</name>
        <dbReference type="ChEBI" id="CHEBI:58017"/>
    </ligand>
</feature>
<feature type="binding site" evidence="1">
    <location>
        <position position="194"/>
    </location>
    <ligand>
        <name>uracil</name>
        <dbReference type="ChEBI" id="CHEBI:17568"/>
    </ligand>
</feature>
<feature type="binding site" evidence="1">
    <location>
        <begin position="199"/>
        <end position="201"/>
    </location>
    <ligand>
        <name>uracil</name>
        <dbReference type="ChEBI" id="CHEBI:17568"/>
    </ligand>
</feature>
<feature type="binding site" evidence="1">
    <location>
        <position position="200"/>
    </location>
    <ligand>
        <name>5-phospho-alpha-D-ribose 1-diphosphate</name>
        <dbReference type="ChEBI" id="CHEBI:58017"/>
    </ligand>
</feature>
<organism>
    <name type="scientific">Lysinibacillus sphaericus (strain C3-41)</name>
    <dbReference type="NCBI Taxonomy" id="444177"/>
    <lineage>
        <taxon>Bacteria</taxon>
        <taxon>Bacillati</taxon>
        <taxon>Bacillota</taxon>
        <taxon>Bacilli</taxon>
        <taxon>Bacillales</taxon>
        <taxon>Bacillaceae</taxon>
        <taxon>Lysinibacillus</taxon>
    </lineage>
</organism>